<feature type="chain" id="PRO_0000156360" description="Probable inosine/xanthosine triphosphatase">
    <location>
        <begin position="1"/>
        <end position="182"/>
    </location>
</feature>
<feature type="binding site" evidence="1">
    <location>
        <position position="42"/>
    </location>
    <ligand>
        <name>Mg(2+)</name>
        <dbReference type="ChEBI" id="CHEBI:18420"/>
    </ligand>
</feature>
<feature type="binding site" evidence="1">
    <location>
        <position position="69"/>
    </location>
    <ligand>
        <name>Mg(2+)</name>
        <dbReference type="ChEBI" id="CHEBI:18420"/>
    </ligand>
</feature>
<proteinExistence type="inferred from homology"/>
<gene>
    <name type="ordered locus">MTH_1897</name>
</gene>
<comment type="function">
    <text evidence="1">Phosphatase that hydrolyzes non-canonical purine nucleotides such as XTP and ITP to their respective diphosphate derivatives. Probably excludes non-canonical purines from DNA/RNA precursor pool, thus preventing their incorporation into DNA/RNA and avoiding chromosomal lesions.</text>
</comment>
<comment type="catalytic activity">
    <reaction evidence="1">
        <text>XTP + H2O = XDP + phosphate + H(+)</text>
        <dbReference type="Rhea" id="RHEA:28406"/>
        <dbReference type="ChEBI" id="CHEBI:15377"/>
        <dbReference type="ChEBI" id="CHEBI:15378"/>
        <dbReference type="ChEBI" id="CHEBI:43474"/>
        <dbReference type="ChEBI" id="CHEBI:59884"/>
        <dbReference type="ChEBI" id="CHEBI:61314"/>
        <dbReference type="EC" id="3.6.1.73"/>
    </reaction>
</comment>
<comment type="catalytic activity">
    <reaction evidence="1">
        <text>ITP + H2O = IDP + phosphate + H(+)</text>
        <dbReference type="Rhea" id="RHEA:28330"/>
        <dbReference type="ChEBI" id="CHEBI:15377"/>
        <dbReference type="ChEBI" id="CHEBI:15378"/>
        <dbReference type="ChEBI" id="CHEBI:43474"/>
        <dbReference type="ChEBI" id="CHEBI:58280"/>
        <dbReference type="ChEBI" id="CHEBI:61402"/>
        <dbReference type="EC" id="3.6.1.73"/>
    </reaction>
</comment>
<comment type="cofactor">
    <cofactor evidence="1">
        <name>Mg(2+)</name>
        <dbReference type="ChEBI" id="CHEBI:18420"/>
    </cofactor>
    <cofactor evidence="1">
        <name>Mn(2+)</name>
        <dbReference type="ChEBI" id="CHEBI:29035"/>
    </cofactor>
    <text evidence="1">Binds 1 divalent metal cation per subunit; can use either Mg(2+) or Mn(2+).</text>
</comment>
<comment type="subunit">
    <text evidence="1">Homodimer.</text>
</comment>
<comment type="similarity">
    <text evidence="1">Belongs to the YjjX NTPase family.</text>
</comment>
<comment type="sequence caution" evidence="2">
    <conflict type="erroneous initiation">
        <sequence resource="EMBL-CDS" id="AAB86357"/>
    </conflict>
    <text>Extended N-terminus.</text>
</comment>
<keyword id="KW-0378">Hydrolase</keyword>
<keyword id="KW-0460">Magnesium</keyword>
<keyword id="KW-0464">Manganese</keyword>
<keyword id="KW-0479">Metal-binding</keyword>
<keyword id="KW-0546">Nucleotide metabolism</keyword>
<keyword id="KW-0547">Nucleotide-binding</keyword>
<keyword id="KW-1185">Reference proteome</keyword>
<accession>O27919</accession>
<sequence length="182" mass="19703">MDSVVFYMKVNVGSGNPVKVRATENVLGLIYGNVEVRGVEVESGVPDQPVGLEETVRGAVNRARRAFRDCELSVGIESGLHRVPETITGFVDLQWCAIYDGEHITLGVSAGFEYPPMVVEEVLAGREVGDVMDELTGVDELGRKRGAVSFLSGGLLDRTGNTEQCVLMAMIPRMNPSLYGLK</sequence>
<organism>
    <name type="scientific">Methanothermobacter thermautotrophicus (strain ATCC 29096 / DSM 1053 / JCM 10044 / NBRC 100330 / Delta H)</name>
    <name type="common">Methanobacterium thermoautotrophicum</name>
    <dbReference type="NCBI Taxonomy" id="187420"/>
    <lineage>
        <taxon>Archaea</taxon>
        <taxon>Methanobacteriati</taxon>
        <taxon>Methanobacteriota</taxon>
        <taxon>Methanomada group</taxon>
        <taxon>Methanobacteria</taxon>
        <taxon>Methanobacteriales</taxon>
        <taxon>Methanobacteriaceae</taxon>
        <taxon>Methanothermobacter</taxon>
    </lineage>
</organism>
<evidence type="ECO:0000255" key="1">
    <source>
        <dbReference type="HAMAP-Rule" id="MF_00648"/>
    </source>
</evidence>
<evidence type="ECO:0000305" key="2"/>
<dbReference type="EC" id="3.6.1.73" evidence="1"/>
<dbReference type="EMBL" id="AE000666">
    <property type="protein sequence ID" value="AAB86357.1"/>
    <property type="status" value="ALT_INIT"/>
    <property type="molecule type" value="Genomic_DNA"/>
</dbReference>
<dbReference type="PIR" id="B69120">
    <property type="entry name" value="B69120"/>
</dbReference>
<dbReference type="SMR" id="O27919"/>
<dbReference type="FunCoup" id="O27919">
    <property type="interactions" value="22"/>
</dbReference>
<dbReference type="STRING" id="187420.MTH_1897"/>
<dbReference type="PaxDb" id="187420-MTH_1897"/>
<dbReference type="EnsemblBacteria" id="AAB86357">
    <property type="protein sequence ID" value="AAB86357"/>
    <property type="gene ID" value="MTH_1897"/>
</dbReference>
<dbReference type="KEGG" id="mth:MTH_1897"/>
<dbReference type="PATRIC" id="fig|187420.15.peg.1848"/>
<dbReference type="HOGENOM" id="CLU_087417_0_1_2"/>
<dbReference type="InParanoid" id="O27919"/>
<dbReference type="Proteomes" id="UP000005223">
    <property type="component" value="Chromosome"/>
</dbReference>
<dbReference type="GO" id="GO:0103023">
    <property type="term" value="F:ITPase activity"/>
    <property type="evidence" value="ECO:0007669"/>
    <property type="project" value="UniProtKB-EC"/>
</dbReference>
<dbReference type="GO" id="GO:0046872">
    <property type="term" value="F:metal ion binding"/>
    <property type="evidence" value="ECO:0007669"/>
    <property type="project" value="UniProtKB-KW"/>
</dbReference>
<dbReference type="GO" id="GO:0000166">
    <property type="term" value="F:nucleotide binding"/>
    <property type="evidence" value="ECO:0007669"/>
    <property type="project" value="UniProtKB-KW"/>
</dbReference>
<dbReference type="GO" id="GO:0017111">
    <property type="term" value="F:ribonucleoside triphosphate phosphatase activity"/>
    <property type="evidence" value="ECO:0000250"/>
    <property type="project" value="UniProtKB"/>
</dbReference>
<dbReference type="GO" id="GO:0009117">
    <property type="term" value="P:nucleotide metabolic process"/>
    <property type="evidence" value="ECO:0007669"/>
    <property type="project" value="UniProtKB-KW"/>
</dbReference>
<dbReference type="GO" id="GO:0006772">
    <property type="term" value="P:thiamine metabolic process"/>
    <property type="evidence" value="ECO:0007669"/>
    <property type="project" value="TreeGrafter"/>
</dbReference>
<dbReference type="FunFam" id="3.90.950.10:FF:000002">
    <property type="entry name" value="Inosine/xanthosine triphosphatase"/>
    <property type="match status" value="1"/>
</dbReference>
<dbReference type="Gene3D" id="3.90.950.10">
    <property type="match status" value="1"/>
</dbReference>
<dbReference type="HAMAP" id="MF_00648">
    <property type="entry name" value="Non_canon_purine_NTPase_YjjX"/>
    <property type="match status" value="1"/>
</dbReference>
<dbReference type="InterPro" id="IPR029001">
    <property type="entry name" value="ITPase-like_fam"/>
</dbReference>
<dbReference type="InterPro" id="IPR002786">
    <property type="entry name" value="Non_canon_purine_NTPase"/>
</dbReference>
<dbReference type="InterPro" id="IPR026533">
    <property type="entry name" value="NTPase/PRRC1"/>
</dbReference>
<dbReference type="InterPro" id="IPR050299">
    <property type="entry name" value="YjjX_NTPase"/>
</dbReference>
<dbReference type="NCBIfam" id="TIGR00258">
    <property type="entry name" value="inosine/xanthosine triphosphatase"/>
    <property type="match status" value="1"/>
</dbReference>
<dbReference type="NCBIfam" id="NF003039">
    <property type="entry name" value="PRK03941.1"/>
    <property type="match status" value="1"/>
</dbReference>
<dbReference type="PANTHER" id="PTHR34699">
    <property type="match status" value="1"/>
</dbReference>
<dbReference type="PANTHER" id="PTHR34699:SF2">
    <property type="entry name" value="NON-CANONICAL PURINE NTP PHOSPHATASE_PRRC1 DOMAIN-CONTAINING PROTEIN"/>
    <property type="match status" value="1"/>
</dbReference>
<dbReference type="Pfam" id="PF01931">
    <property type="entry name" value="NTPase_I-T"/>
    <property type="match status" value="1"/>
</dbReference>
<dbReference type="SUPFAM" id="SSF52972">
    <property type="entry name" value="ITPase-like"/>
    <property type="match status" value="1"/>
</dbReference>
<name>NCPP_METTH</name>
<reference key="1">
    <citation type="journal article" date="1997" name="J. Bacteriol.">
        <title>Complete genome sequence of Methanobacterium thermoautotrophicum deltaH: functional analysis and comparative genomics.</title>
        <authorList>
            <person name="Smith D.R."/>
            <person name="Doucette-Stamm L.A."/>
            <person name="Deloughery C."/>
            <person name="Lee H.-M."/>
            <person name="Dubois J."/>
            <person name="Aldredge T."/>
            <person name="Bashirzadeh R."/>
            <person name="Blakely D."/>
            <person name="Cook R."/>
            <person name="Gilbert K."/>
            <person name="Harrison D."/>
            <person name="Hoang L."/>
            <person name="Keagle P."/>
            <person name="Lumm W."/>
            <person name="Pothier B."/>
            <person name="Qiu D."/>
            <person name="Spadafora R."/>
            <person name="Vicare R."/>
            <person name="Wang Y."/>
            <person name="Wierzbowski J."/>
            <person name="Gibson R."/>
            <person name="Jiwani N."/>
            <person name="Caruso A."/>
            <person name="Bush D."/>
            <person name="Safer H."/>
            <person name="Patwell D."/>
            <person name="Prabhakar S."/>
            <person name="McDougall S."/>
            <person name="Shimer G."/>
            <person name="Goyal A."/>
            <person name="Pietrovski S."/>
            <person name="Church G.M."/>
            <person name="Daniels C.J."/>
            <person name="Mao J.-I."/>
            <person name="Rice P."/>
            <person name="Noelling J."/>
            <person name="Reeve J.N."/>
        </authorList>
    </citation>
    <scope>NUCLEOTIDE SEQUENCE [LARGE SCALE GENOMIC DNA]</scope>
    <source>
        <strain>ATCC 29096 / DSM 1053 / JCM 10044 / NBRC 100330 / Delta H</strain>
    </source>
</reference>
<protein>
    <recommendedName>
        <fullName evidence="1">Probable inosine/xanthosine triphosphatase</fullName>
        <shortName evidence="1">ITPase/XTPase</shortName>
        <ecNumber evidence="1">3.6.1.73</ecNumber>
    </recommendedName>
    <alternativeName>
        <fullName evidence="1">Non-canonical purine NTP phosphatase</fullName>
    </alternativeName>
    <alternativeName>
        <fullName evidence="1">Non-standard purine NTP phosphatase</fullName>
    </alternativeName>
    <alternativeName>
        <fullName evidence="1">Nucleoside-triphosphate phosphatase</fullName>
        <shortName evidence="1">NTPase</shortName>
    </alternativeName>
</protein>